<organism>
    <name type="scientific">Mus musculus</name>
    <name type="common">Mouse</name>
    <dbReference type="NCBI Taxonomy" id="10090"/>
    <lineage>
        <taxon>Eukaryota</taxon>
        <taxon>Metazoa</taxon>
        <taxon>Chordata</taxon>
        <taxon>Craniata</taxon>
        <taxon>Vertebrata</taxon>
        <taxon>Euteleostomi</taxon>
        <taxon>Mammalia</taxon>
        <taxon>Eutheria</taxon>
        <taxon>Euarchontoglires</taxon>
        <taxon>Glires</taxon>
        <taxon>Rodentia</taxon>
        <taxon>Myomorpha</taxon>
        <taxon>Muroidea</taxon>
        <taxon>Muridae</taxon>
        <taxon>Murinae</taxon>
        <taxon>Mus</taxon>
        <taxon>Mus</taxon>
    </lineage>
</organism>
<comment type="function">
    <text evidence="2 13 14 15 16 17 18 19 20 21 22 23">Adhesion G-protein coupled receptor (aGPCR) for steroid hormones, such as progesterone and 17alpha-hydroxyprogesterone (17OHP) (By similarity). Involved in many biological processes, such as myelination, sprouting angiogenesis, placenta, ear and cartilage development (PubMed:21613327, PubMed:24082093, PubMed:24227709, PubMed:25217645, PubMed:25695270, PubMed:25954032, PubMed:27501152, PubMed:34767447). Ligand binding causes a conformation change that triggers signaling via guanine nucleotide-binding proteins (G proteins) and modulates the activity of downstream effectors, such as adenylate cyclase (By similarity). ADGRG6 is coupled to G(i) G alpha proteins and mediates inhibition of adenylate cyclase (By similarity). Also able to couple to G(q) G proteins (By similarity). Involved in myelination of the peripheral nervous system: required for differentiation of promyelinating Schwann cells and for normal myelination of axons (PubMed:21613327, PubMed:24227709, PubMed:27927955). Also acts as a regulator of body length and bone mass (PubMed:32219165). Acts as a regulator of blood-brain barrier formation in the central nervous system vie its association with LRP1 and ITGB1 (PubMed:39087467).</text>
</comment>
<comment type="activity regulation">
    <text evidence="3">Forms a heterodimer of 2 chains generated by proteolytic processing that remain associated through non-covalent interactions mediated by the GAIN-B domain. In the inactivated receptor, the Stachel sequence (also named stalk) is embedded in the GAIN-B domain, where it adopts a beta-strand conformation. On activation, the Stachel moves into the 7 transmembrane region and adopts a twisted hook-shaped configuration that forms contacts within the receptor, leading to coupling of a G-alpha protein, which activates signaling. The cleaved GAIN-B and N-terminal domains can then dissociate from the rest of the receptor.</text>
</comment>
<comment type="subunit">
    <text evidence="3 17 19 23">Heterodimer of 2 chains generated by proteolytic processing; the large extracellular N-terminal fragment and the membrane-bound C-terminal fragment predominantly remain associated and non-covalently linked (By similarity). Interacts with Laminin-2; this interaction stabilizes the receptor in an inactive state (PubMed:25695270). Laminin-2 polymerization could facilitate ADGRG6-NTF removal, thereby exposing the tethered agonist to drive myelination (PubMed:25695270). Interacts with PRNP (PubMed:27501152). Interacts with ITGB1 (PubMed:39087467). Interacts with LRP1 (PubMed:39087467).</text>
</comment>
<comment type="subcellular location">
    <subcellularLocation>
        <location evidence="23">Cell membrane</location>
        <topology evidence="4">Multi-pass membrane protein</topology>
    </subcellularLocation>
</comment>
<comment type="tissue specificity">
    <text evidence="9 14">Expressed at high levels in the heart, somite and otic vesicle during embryogenesis and in adult lung.</text>
</comment>
<comment type="domain">
    <text evidence="2 3">The Stachel sequence (also named stalk) in the C-terminal part of the extracellular domain (ECD) functions as a tethered agonist (By similarity). In the inactivated receptor, the Stachel sequence (also named stalk) is embedded in the GAIN-B domain, where it adopts a beta-strand conformation. On activation, the Stachel moves into the 7 transmembrane region and adopts a twisted hook-shaped configuration that forms contacts within the receptor, leading to coupling of a G-alpha protein, which activates signaling (By similarity).</text>
</comment>
<comment type="PTM">
    <text evidence="2">Proteolytically cleaved into 2 conserved sites: one in the GPS region of the GAIN-B domain (S1 site) and the other in the middle of the extracellular domain (S2 site). The proteolytic cleavage at S1 site generates an extracellular subunit and a seven-transmembrane subunit. Furin is involved in the cleavage of the S2 site generating a soluble fragment. Processing at the GPS region occurred independent of and probably prior to the cleavage at the S2 site. Proteolytic cleavage is required for activation of the receptor.</text>
</comment>
<comment type="disruption phenotype">
    <text evidence="12 13 14 18 22 23">Deficient mice die during organogenesis (PubMed:21124978, PubMed:24082093, PubMed:34767447). Mutant embryos show signs of myocardial wall thinning, hypotrabeculation, defective mitochondrial and circulatory failure (PubMed:21124978, PubMed:24082093, PubMed:34767447). Defects in myocardium are not caused by heart defects but due to placental defects (PubMed:34767447). They also display severe congenital hypomyelinating peripheral neuropathy (PubMed:21613327). Conditional deletion in osteochondroprogenitor cells leads to defects in cartilage and spinal column development (PubMed:25954032). Conditional deletion in the endocardium does not affect heart development or function (PubMed:34767447). Conditional deletion in endothelial cells leads to aberrant vascular morphogenesis, resulting in disrupted blood-brain barrier organization (PubMed:39087467).</text>
</comment>
<comment type="similarity">
    <text evidence="27">Belongs to the G-protein coupled receptor 2 family. Adhesion G-protein coupled receptor (ADGR) subfamily.</text>
</comment>
<comment type="caution">
    <text evidence="12 14 22">Was initially thought to play a role in cardiac development (PubMed:21124978, PubMed:24082093). However, it was later shown that the cardiac phenotype in knockout mice is due to defects in placental development (PubMed:34767447).</text>
</comment>
<protein>
    <recommendedName>
        <fullName evidence="27">Adhesion G-protein coupled receptor G6</fullName>
    </recommendedName>
    <alternativeName>
        <fullName evidence="24">Developmentally regulated G-protein-coupled receptor</fullName>
    </alternativeName>
    <alternativeName>
        <fullName evidence="25">G-protein coupled receptor 126</fullName>
    </alternativeName>
    <component>
        <recommendedName>
            <fullName>Adhesion G-protein coupled receptor G6, N-terminal fragment</fullName>
        </recommendedName>
        <alternativeName>
            <fullName>ADGRG6 N-terminal fragment</fullName>
            <shortName>ADGRG6-NTF</shortName>
        </alternativeName>
    </component>
    <component>
        <recommendedName>
            <fullName>Adhesion G-protein coupled receptor G6, C-terminal fragment</fullName>
        </recommendedName>
        <alternativeName>
            <fullName>ADGRG6 C-terminal fragment</fullName>
            <shortName>ADGRG6-CTF</shortName>
        </alternativeName>
    </component>
</protein>
<dbReference type="EMBL" id="AB183545">
    <property type="protein sequence ID" value="BAD27570.1"/>
    <property type="molecule type" value="mRNA"/>
</dbReference>
<dbReference type="EMBL" id="BC046534">
    <property type="protein sequence ID" value="AAH46534.1"/>
    <property type="molecule type" value="mRNA"/>
</dbReference>
<dbReference type="CCDS" id="CCDS35848.1"/>
<dbReference type="RefSeq" id="NP_001002268.1">
    <property type="nucleotide sequence ID" value="NM_001002268.3"/>
</dbReference>
<dbReference type="SMR" id="Q6F3F9"/>
<dbReference type="FunCoup" id="Q6F3F9">
    <property type="interactions" value="520"/>
</dbReference>
<dbReference type="STRING" id="10090.ENSMUSP00000043055"/>
<dbReference type="GlyCosmos" id="Q6F3F9">
    <property type="glycosylation" value="23 sites, No reported glycans"/>
</dbReference>
<dbReference type="GlyGen" id="Q6F3F9">
    <property type="glycosylation" value="25 sites, 4 N-linked glycans (4 sites), 1 O-linked glycan (2 sites)"/>
</dbReference>
<dbReference type="iPTMnet" id="Q6F3F9"/>
<dbReference type="PhosphoSitePlus" id="Q6F3F9"/>
<dbReference type="CPTAC" id="non-CPTAC-3685"/>
<dbReference type="PaxDb" id="10090-ENSMUSP00000043055"/>
<dbReference type="PeptideAtlas" id="Q6F3F9"/>
<dbReference type="ProteomicsDB" id="282039"/>
<dbReference type="Antibodypedia" id="1571">
    <property type="antibodies" value="210 antibodies from 28 providers"/>
</dbReference>
<dbReference type="Ensembl" id="ENSMUST00000041168.6">
    <property type="protein sequence ID" value="ENSMUSP00000043055.5"/>
    <property type="gene ID" value="ENSMUSG00000039116.8"/>
</dbReference>
<dbReference type="GeneID" id="215798"/>
<dbReference type="KEGG" id="mmu:215798"/>
<dbReference type="UCSC" id="uc007elk.1">
    <property type="organism name" value="mouse"/>
</dbReference>
<dbReference type="AGR" id="MGI:1916151"/>
<dbReference type="CTD" id="57211"/>
<dbReference type="MGI" id="MGI:1916151">
    <property type="gene designation" value="Adgrg6"/>
</dbReference>
<dbReference type="VEuPathDB" id="HostDB:ENSMUSG00000039116"/>
<dbReference type="eggNOG" id="KOG3714">
    <property type="taxonomic scope" value="Eukaryota"/>
</dbReference>
<dbReference type="eggNOG" id="KOG4193">
    <property type="taxonomic scope" value="Eukaryota"/>
</dbReference>
<dbReference type="GeneTree" id="ENSGT00940000155621"/>
<dbReference type="HOGENOM" id="CLU_002753_3_3_1"/>
<dbReference type="InParanoid" id="Q6F3F9"/>
<dbReference type="PhylomeDB" id="Q6F3F9"/>
<dbReference type="TreeFam" id="TF321769"/>
<dbReference type="Reactome" id="R-MMU-9619665">
    <property type="pathway name" value="EGR2 and SOX10-mediated initiation of Schwann cell myelination"/>
</dbReference>
<dbReference type="BioGRID-ORCS" id="215798">
    <property type="hits" value="3 hits in 75 CRISPR screens"/>
</dbReference>
<dbReference type="ChiTaRS" id="Adgrg6">
    <property type="organism name" value="mouse"/>
</dbReference>
<dbReference type="PRO" id="PR:Q6F3F9"/>
<dbReference type="Proteomes" id="UP000000589">
    <property type="component" value="Chromosome 10"/>
</dbReference>
<dbReference type="RNAct" id="Q6F3F9">
    <property type="molecule type" value="protein"/>
</dbReference>
<dbReference type="Bgee" id="ENSMUSG00000039116">
    <property type="expression patterns" value="Expressed in otolith organ and 193 other cell types or tissues"/>
</dbReference>
<dbReference type="ExpressionAtlas" id="Q6F3F9">
    <property type="expression patterns" value="baseline and differential"/>
</dbReference>
<dbReference type="GO" id="GO:0009986">
    <property type="term" value="C:cell surface"/>
    <property type="evidence" value="ECO:0000266"/>
    <property type="project" value="MGI"/>
</dbReference>
<dbReference type="GO" id="GO:0005737">
    <property type="term" value="C:cytoplasm"/>
    <property type="evidence" value="ECO:0000266"/>
    <property type="project" value="MGI"/>
</dbReference>
<dbReference type="GO" id="GO:0005886">
    <property type="term" value="C:plasma membrane"/>
    <property type="evidence" value="ECO:0000314"/>
    <property type="project" value="UniProtKB"/>
</dbReference>
<dbReference type="GO" id="GO:0005518">
    <property type="term" value="F:collagen binding"/>
    <property type="evidence" value="ECO:0000250"/>
    <property type="project" value="UniProtKB"/>
</dbReference>
<dbReference type="GO" id="GO:0050840">
    <property type="term" value="F:extracellular matrix binding"/>
    <property type="evidence" value="ECO:0000250"/>
    <property type="project" value="UniProtKB"/>
</dbReference>
<dbReference type="GO" id="GO:0004930">
    <property type="term" value="F:G protein-coupled receptor activity"/>
    <property type="evidence" value="ECO:0000250"/>
    <property type="project" value="UniProtKB"/>
</dbReference>
<dbReference type="GO" id="GO:0043236">
    <property type="term" value="F:laminin binding"/>
    <property type="evidence" value="ECO:0000315"/>
    <property type="project" value="UniProtKB"/>
</dbReference>
<dbReference type="GO" id="GO:0007189">
    <property type="term" value="P:adenylate cyclase-activating G protein-coupled receptor signaling pathway"/>
    <property type="evidence" value="ECO:0000315"/>
    <property type="project" value="UniProtKB"/>
</dbReference>
<dbReference type="GO" id="GO:0007193">
    <property type="term" value="P:adenylate cyclase-inhibiting G protein-coupled receptor signaling pathway"/>
    <property type="evidence" value="ECO:0000250"/>
    <property type="project" value="UniProtKB"/>
</dbReference>
<dbReference type="GO" id="GO:0007188">
    <property type="term" value="P:adenylate cyclase-modulating G protein-coupled receptor signaling pathway"/>
    <property type="evidence" value="ECO:0000250"/>
    <property type="project" value="UniProtKB"/>
</dbReference>
<dbReference type="GO" id="GO:0051216">
    <property type="term" value="P:cartilage development"/>
    <property type="evidence" value="ECO:0000315"/>
    <property type="project" value="UniProtKB"/>
</dbReference>
<dbReference type="GO" id="GO:0007166">
    <property type="term" value="P:cell surface receptor signaling pathway"/>
    <property type="evidence" value="ECO:0000250"/>
    <property type="project" value="UniProtKB"/>
</dbReference>
<dbReference type="GO" id="GO:0060856">
    <property type="term" value="P:establishment of blood-brain barrier"/>
    <property type="evidence" value="ECO:0000314"/>
    <property type="project" value="UniProtKB"/>
</dbReference>
<dbReference type="GO" id="GO:0060347">
    <property type="term" value="P:heart trabecula formation"/>
    <property type="evidence" value="ECO:0000315"/>
    <property type="project" value="UniProtKB"/>
</dbReference>
<dbReference type="GO" id="GO:0007005">
    <property type="term" value="P:mitochondrion organization"/>
    <property type="evidence" value="ECO:0000315"/>
    <property type="project" value="UniProtKB"/>
</dbReference>
<dbReference type="GO" id="GO:0042552">
    <property type="term" value="P:myelination"/>
    <property type="evidence" value="ECO:0000250"/>
    <property type="project" value="UniProtKB"/>
</dbReference>
<dbReference type="GO" id="GO:0022011">
    <property type="term" value="P:myelination in peripheral nervous system"/>
    <property type="evidence" value="ECO:0000315"/>
    <property type="project" value="UniProtKB"/>
</dbReference>
<dbReference type="GO" id="GO:0001890">
    <property type="term" value="P:placenta development"/>
    <property type="evidence" value="ECO:0000314"/>
    <property type="project" value="UniProtKB"/>
</dbReference>
<dbReference type="GO" id="GO:0030500">
    <property type="term" value="P:regulation of bone mineralization"/>
    <property type="evidence" value="ECO:0000315"/>
    <property type="project" value="UniProtKB"/>
</dbReference>
<dbReference type="GO" id="GO:1903670">
    <property type="term" value="P:regulation of sprouting angiogenesis"/>
    <property type="evidence" value="ECO:0000315"/>
    <property type="project" value="UniProtKB"/>
</dbReference>
<dbReference type="GO" id="GO:0014037">
    <property type="term" value="P:Schwann cell differentiation"/>
    <property type="evidence" value="ECO:0000315"/>
    <property type="project" value="UniProtKB"/>
</dbReference>
<dbReference type="CDD" id="cd00041">
    <property type="entry name" value="CUB"/>
    <property type="match status" value="1"/>
</dbReference>
<dbReference type="FunFam" id="2.60.120.200:FF:000050">
    <property type="entry name" value="Adhesion G protein-coupled receptor G6"/>
    <property type="match status" value="1"/>
</dbReference>
<dbReference type="FunFam" id="1.20.1070.10:FF:000052">
    <property type="entry name" value="Adhesion G-protein coupled receptor G6"/>
    <property type="match status" value="1"/>
</dbReference>
<dbReference type="FunFam" id="2.60.120.290:FF:000019">
    <property type="entry name" value="Adhesion G-protein coupled receptor G6"/>
    <property type="match status" value="1"/>
</dbReference>
<dbReference type="FunFam" id="2.60.220.50:FF:000006">
    <property type="entry name" value="Adhesion G-protein coupled receptor G6"/>
    <property type="match status" value="1"/>
</dbReference>
<dbReference type="Gene3D" id="2.60.120.200">
    <property type="match status" value="1"/>
</dbReference>
<dbReference type="Gene3D" id="2.60.220.50">
    <property type="match status" value="1"/>
</dbReference>
<dbReference type="Gene3D" id="1.20.1070.10">
    <property type="entry name" value="Rhodopsin 7-helix transmembrane proteins"/>
    <property type="match status" value="1"/>
</dbReference>
<dbReference type="Gene3D" id="2.60.120.290">
    <property type="entry name" value="Spermadhesin, CUB domain"/>
    <property type="match status" value="1"/>
</dbReference>
<dbReference type="InterPro" id="IPR013320">
    <property type="entry name" value="ConA-like_dom_sf"/>
</dbReference>
<dbReference type="InterPro" id="IPR000859">
    <property type="entry name" value="CUB_dom"/>
</dbReference>
<dbReference type="InterPro" id="IPR057244">
    <property type="entry name" value="GAIN_B"/>
</dbReference>
<dbReference type="InterPro" id="IPR046338">
    <property type="entry name" value="GAIN_dom_sf"/>
</dbReference>
<dbReference type="InterPro" id="IPR017981">
    <property type="entry name" value="GPCR_2-like_7TM"/>
</dbReference>
<dbReference type="InterPro" id="IPR036445">
    <property type="entry name" value="GPCR_2_extracell_dom_sf"/>
</dbReference>
<dbReference type="InterPro" id="IPR001879">
    <property type="entry name" value="GPCR_2_extracellular_dom"/>
</dbReference>
<dbReference type="InterPro" id="IPR000832">
    <property type="entry name" value="GPCR_2_secretin-like"/>
</dbReference>
<dbReference type="InterPro" id="IPR017983">
    <property type="entry name" value="GPCR_2_secretin-like_CS"/>
</dbReference>
<dbReference type="InterPro" id="IPR000203">
    <property type="entry name" value="GPS"/>
</dbReference>
<dbReference type="InterPro" id="IPR001759">
    <property type="entry name" value="Pentraxin-related"/>
</dbReference>
<dbReference type="InterPro" id="IPR035914">
    <property type="entry name" value="Sperma_CUB_dom_sf"/>
</dbReference>
<dbReference type="PANTHER" id="PTHR12011">
    <property type="entry name" value="ADHESION G-PROTEIN COUPLED RECEPTOR"/>
    <property type="match status" value="1"/>
</dbReference>
<dbReference type="PANTHER" id="PTHR12011:SF290">
    <property type="entry name" value="ADHESION G-PROTEIN COUPLED RECEPTOR G6"/>
    <property type="match status" value="1"/>
</dbReference>
<dbReference type="Pfam" id="PF00002">
    <property type="entry name" value="7tm_2"/>
    <property type="match status" value="1"/>
</dbReference>
<dbReference type="Pfam" id="PF00431">
    <property type="entry name" value="CUB"/>
    <property type="match status" value="1"/>
</dbReference>
<dbReference type="Pfam" id="PF01825">
    <property type="entry name" value="GPS"/>
    <property type="match status" value="1"/>
</dbReference>
<dbReference type="Pfam" id="PF25307">
    <property type="entry name" value="SEA_Gpr126"/>
    <property type="match status" value="1"/>
</dbReference>
<dbReference type="PRINTS" id="PR00249">
    <property type="entry name" value="GPCRSECRETIN"/>
</dbReference>
<dbReference type="SMART" id="SM00042">
    <property type="entry name" value="CUB"/>
    <property type="match status" value="1"/>
</dbReference>
<dbReference type="SMART" id="SM00303">
    <property type="entry name" value="GPS"/>
    <property type="match status" value="1"/>
</dbReference>
<dbReference type="SMART" id="SM00159">
    <property type="entry name" value="PTX"/>
    <property type="match status" value="1"/>
</dbReference>
<dbReference type="SUPFAM" id="SSF49899">
    <property type="entry name" value="Concanavalin A-like lectins/glucanases"/>
    <property type="match status" value="1"/>
</dbReference>
<dbReference type="SUPFAM" id="SSF81321">
    <property type="entry name" value="Family A G protein-coupled receptor-like"/>
    <property type="match status" value="1"/>
</dbReference>
<dbReference type="SUPFAM" id="SSF111418">
    <property type="entry name" value="Hormone receptor domain"/>
    <property type="match status" value="1"/>
</dbReference>
<dbReference type="SUPFAM" id="SSF49854">
    <property type="entry name" value="Spermadhesin, CUB domain"/>
    <property type="match status" value="1"/>
</dbReference>
<dbReference type="PROSITE" id="PS01180">
    <property type="entry name" value="CUB"/>
    <property type="match status" value="1"/>
</dbReference>
<dbReference type="PROSITE" id="PS00650">
    <property type="entry name" value="G_PROTEIN_RECEP_F2_2"/>
    <property type="match status" value="1"/>
</dbReference>
<dbReference type="PROSITE" id="PS50227">
    <property type="entry name" value="G_PROTEIN_RECEP_F2_3"/>
    <property type="match status" value="1"/>
</dbReference>
<dbReference type="PROSITE" id="PS50261">
    <property type="entry name" value="G_PROTEIN_RECEP_F2_4"/>
    <property type="match status" value="1"/>
</dbReference>
<dbReference type="PROSITE" id="PS50221">
    <property type="entry name" value="GAIN_B"/>
    <property type="match status" value="1"/>
</dbReference>
<dbReference type="PROSITE" id="PS51828">
    <property type="entry name" value="PTX_2"/>
    <property type="match status" value="1"/>
</dbReference>
<accession>Q6F3F9</accession>
<accession>Q811E4</accession>
<name>AGRG6_MOUSE</name>
<keyword id="KW-0106">Calcium</keyword>
<keyword id="KW-1003">Cell membrane</keyword>
<keyword id="KW-0165">Cleavage on pair of basic residues</keyword>
<keyword id="KW-0903">Direct protein sequencing</keyword>
<keyword id="KW-1015">Disulfide bond</keyword>
<keyword id="KW-0297">G-protein coupled receptor</keyword>
<keyword id="KW-0325">Glycoprotein</keyword>
<keyword id="KW-0472">Membrane</keyword>
<keyword id="KW-0479">Metal-binding</keyword>
<keyword id="KW-0597">Phosphoprotein</keyword>
<keyword id="KW-0675">Receptor</keyword>
<keyword id="KW-1185">Reference proteome</keyword>
<keyword id="KW-0732">Signal</keyword>
<keyword id="KW-0807">Transducer</keyword>
<keyword id="KW-0812">Transmembrane</keyword>
<keyword id="KW-1133">Transmembrane helix</keyword>
<evidence type="ECO:0000250" key="1">
    <source>
        <dbReference type="UniProtKB" id="C6KFA3"/>
    </source>
</evidence>
<evidence type="ECO:0000250" key="2">
    <source>
        <dbReference type="UniProtKB" id="Q86SQ4"/>
    </source>
</evidence>
<evidence type="ECO:0000250" key="3">
    <source>
        <dbReference type="UniProtKB" id="Q8IZF4"/>
    </source>
</evidence>
<evidence type="ECO:0000255" key="4"/>
<evidence type="ECO:0000255" key="5">
    <source>
        <dbReference type="PROSITE-ProRule" id="PRU00059"/>
    </source>
</evidence>
<evidence type="ECO:0000255" key="6">
    <source>
        <dbReference type="PROSITE-ProRule" id="PRU00098"/>
    </source>
</evidence>
<evidence type="ECO:0000255" key="7">
    <source>
        <dbReference type="PROSITE-ProRule" id="PRU01172"/>
    </source>
</evidence>
<evidence type="ECO:0000256" key="8">
    <source>
        <dbReference type="SAM" id="MobiDB-lite"/>
    </source>
</evidence>
<evidence type="ECO:0000269" key="9">
    <source>
    </source>
</evidence>
<evidence type="ECO:0000269" key="10">
    <source>
    </source>
</evidence>
<evidence type="ECO:0000269" key="11">
    <source>
    </source>
</evidence>
<evidence type="ECO:0000269" key="12">
    <source>
    </source>
</evidence>
<evidence type="ECO:0000269" key="13">
    <source>
    </source>
</evidence>
<evidence type="ECO:0000269" key="14">
    <source>
    </source>
</evidence>
<evidence type="ECO:0000269" key="15">
    <source>
    </source>
</evidence>
<evidence type="ECO:0000269" key="16">
    <source>
    </source>
</evidence>
<evidence type="ECO:0000269" key="17">
    <source>
    </source>
</evidence>
<evidence type="ECO:0000269" key="18">
    <source>
    </source>
</evidence>
<evidence type="ECO:0000269" key="19">
    <source>
    </source>
</evidence>
<evidence type="ECO:0000269" key="20">
    <source>
    </source>
</evidence>
<evidence type="ECO:0000269" key="21">
    <source>
    </source>
</evidence>
<evidence type="ECO:0000269" key="22">
    <source>
    </source>
</evidence>
<evidence type="ECO:0000269" key="23">
    <source>
    </source>
</evidence>
<evidence type="ECO:0000303" key="24">
    <source>
    </source>
</evidence>
<evidence type="ECO:0000303" key="25">
    <source>
    </source>
</evidence>
<evidence type="ECO:0000303" key="26">
    <source>
    </source>
</evidence>
<evidence type="ECO:0000305" key="27"/>
<evidence type="ECO:0000305" key="28">
    <source>
    </source>
</evidence>
<evidence type="ECO:0000312" key="29">
    <source>
        <dbReference type="MGI" id="MGI:1916151"/>
    </source>
</evidence>
<evidence type="ECO:0007744" key="30">
    <source>
    </source>
</evidence>
<proteinExistence type="evidence at protein level"/>
<gene>
    <name evidence="26 29" type="primary">Adgrg6</name>
    <name evidence="24" type="synonym">Dreg</name>
    <name type="synonym">Gm222</name>
    <name evidence="25" type="synonym">Gpr126</name>
</gene>
<feature type="signal peptide" evidence="4">
    <location>
        <begin position="1"/>
        <end position="30"/>
    </location>
</feature>
<feature type="chain" id="PRO_0000303888" description="Adhesion G-protein coupled receptor G6">
    <location>
        <begin position="31"/>
        <end position="1165"/>
    </location>
</feature>
<feature type="chain" id="PRO_0000438598" description="Adhesion G-protein coupled receptor G6, N-terminal fragment" evidence="28">
    <location>
        <begin position="31"/>
        <end position="440"/>
    </location>
</feature>
<feature type="chain" id="PRO_0000438599" description="Adhesion G-protein coupled receptor G6, C-terminal fragment" evidence="28">
    <location>
        <begin position="441"/>
        <end position="1165"/>
    </location>
</feature>
<feature type="topological domain" description="Extracellular" evidence="4">
    <location>
        <begin position="31"/>
        <end position="832"/>
    </location>
</feature>
<feature type="transmembrane region" description="Helical; Name=1" evidence="4">
    <location>
        <begin position="833"/>
        <end position="853"/>
    </location>
</feature>
<feature type="topological domain" description="Cytoplasmic" evidence="4">
    <location>
        <begin position="854"/>
        <end position="873"/>
    </location>
</feature>
<feature type="transmembrane region" description="Helical; Name=2" evidence="4">
    <location>
        <begin position="874"/>
        <end position="894"/>
    </location>
</feature>
<feature type="topological domain" description="Extracellular" evidence="4">
    <location>
        <begin position="895"/>
        <end position="899"/>
    </location>
</feature>
<feature type="transmembrane region" description="Helical; Name=3" evidence="4">
    <location>
        <begin position="900"/>
        <end position="920"/>
    </location>
</feature>
<feature type="topological domain" description="Cytoplasmic" evidence="4">
    <location>
        <begin position="921"/>
        <end position="940"/>
    </location>
</feature>
<feature type="transmembrane region" description="Helical; Name=4" evidence="4">
    <location>
        <begin position="941"/>
        <end position="961"/>
    </location>
</feature>
<feature type="topological domain" description="Extracellular" evidence="4">
    <location>
        <begin position="962"/>
        <end position="994"/>
    </location>
</feature>
<feature type="transmembrane region" description="Helical; Name=5" evidence="4">
    <location>
        <begin position="995"/>
        <end position="1015"/>
    </location>
</feature>
<feature type="topological domain" description="Cytoplasmic" evidence="4">
    <location>
        <begin position="1016"/>
        <end position="1039"/>
    </location>
</feature>
<feature type="transmembrane region" description="Helical; Name=6" evidence="4">
    <location>
        <begin position="1040"/>
        <end position="1060"/>
    </location>
</feature>
<feature type="topological domain" description="Extracellular" evidence="4">
    <location>
        <begin position="1061"/>
        <end position="1062"/>
    </location>
</feature>
<feature type="transmembrane region" description="Helical; Name=7" evidence="4">
    <location>
        <begin position="1063"/>
        <end position="1083"/>
    </location>
</feature>
<feature type="topological domain" description="Cytoplasmic" evidence="4">
    <location>
        <begin position="1084"/>
        <end position="1165"/>
    </location>
</feature>
<feature type="domain" description="CUB" evidence="5">
    <location>
        <begin position="41"/>
        <end position="149"/>
    </location>
</feature>
<feature type="domain" description="Pentraxin (PTX)" evidence="7">
    <location>
        <begin position="154"/>
        <end position="356"/>
    </location>
</feature>
<feature type="domain" description="GAIN-B" evidence="6">
    <location>
        <begin position="640"/>
        <end position="823"/>
    </location>
</feature>
<feature type="region of interest" description="Mediates interaction with laminin-2" evidence="17">
    <location>
        <begin position="446"/>
        <end position="807"/>
    </location>
</feature>
<feature type="region of interest" description="GPS" evidence="6">
    <location>
        <begin position="773"/>
        <end position="823"/>
    </location>
</feature>
<feature type="region of interest" description="Stachel" evidence="2">
    <location>
        <begin position="812"/>
        <end position="820"/>
    </location>
</feature>
<feature type="region of interest" description="Disordered" evidence="8">
    <location>
        <begin position="1126"/>
        <end position="1165"/>
    </location>
</feature>
<feature type="compositionally biased region" description="Low complexity" evidence="8">
    <location>
        <begin position="1126"/>
        <end position="1154"/>
    </location>
</feature>
<feature type="binding site" evidence="1">
    <location>
        <position position="89"/>
    </location>
    <ligand>
        <name>Ca(2+)</name>
        <dbReference type="ChEBI" id="CHEBI:29108"/>
    </ligand>
</feature>
<feature type="binding site" evidence="1">
    <location>
        <position position="97"/>
    </location>
    <ligand>
        <name>Ca(2+)</name>
        <dbReference type="ChEBI" id="CHEBI:29108"/>
    </ligand>
</feature>
<feature type="binding site" evidence="1">
    <location>
        <position position="134"/>
    </location>
    <ligand>
        <name>Ca(2+)</name>
        <dbReference type="ChEBI" id="CHEBI:29108"/>
    </ligand>
</feature>
<feature type="binding site" evidence="1">
    <location>
        <position position="136"/>
    </location>
    <ligand>
        <name>Ca(2+)</name>
        <dbReference type="ChEBI" id="CHEBI:29108"/>
    </ligand>
</feature>
<feature type="binding site" evidence="1">
    <location>
        <position position="137"/>
    </location>
    <ligand>
        <name>Ca(2+)</name>
        <dbReference type="ChEBI" id="CHEBI:29108"/>
    </ligand>
</feature>
<feature type="binding site" evidence="2">
    <location>
        <position position="1073"/>
    </location>
    <ligand>
        <name>17alpha-hydroxyprogesterone</name>
        <dbReference type="ChEBI" id="CHEBI:17252"/>
    </ligand>
</feature>
<feature type="site" description="Cleavage; by furin like-convertase" evidence="10">
    <location>
        <begin position="440"/>
        <end position="441"/>
    </location>
</feature>
<feature type="site" description="Cleavage" evidence="10">
    <location>
        <begin position="810"/>
        <end position="811"/>
    </location>
</feature>
<feature type="modified residue" description="Phosphoserine" evidence="30">
    <location>
        <position position="1135"/>
    </location>
</feature>
<feature type="modified residue" description="Phosphoserine" evidence="30">
    <location>
        <position position="1138"/>
    </location>
</feature>
<feature type="glycosylation site" description="N-linked (GlcNAc...) asparagine" evidence="4">
    <location>
        <position position="121"/>
    </location>
</feature>
<feature type="glycosylation site" description="N-linked (GlcNAc...) asparagine" evidence="4">
    <location>
        <position position="143"/>
    </location>
</feature>
<feature type="glycosylation site" description="N-linked (GlcNAc...) asparagine" evidence="4">
    <location>
        <position position="258"/>
    </location>
</feature>
<feature type="glycosylation site" description="N-linked (GlcNAc...) asparagine" evidence="11">
    <location>
        <position position="314"/>
    </location>
</feature>
<feature type="glycosylation site" description="N-linked (GlcNAc...) asparagine" evidence="4">
    <location>
        <position position="324"/>
    </location>
</feature>
<feature type="glycosylation site" description="N-linked (GlcNAc...) asparagine" evidence="4">
    <location>
        <position position="353"/>
    </location>
</feature>
<feature type="glycosylation site" description="N-linked (GlcNAc...) asparagine" evidence="4">
    <location>
        <position position="370"/>
    </location>
</feature>
<feature type="glycosylation site" description="N-linked (GlcNAc...) asparagine" evidence="4">
    <location>
        <position position="410"/>
    </location>
</feature>
<feature type="glycosylation site" description="N-linked (GlcNAc...) asparagine" evidence="4">
    <location>
        <position position="417"/>
    </location>
</feature>
<feature type="glycosylation site" description="N-linked (GlcNAc...) asparagine" evidence="4">
    <location>
        <position position="424"/>
    </location>
</feature>
<feature type="glycosylation site" description="N-linked (GlcNAc...) asparagine" evidence="4">
    <location>
        <position position="458"/>
    </location>
</feature>
<feature type="glycosylation site" description="N-linked (GlcNAc...) asparagine" evidence="4">
    <location>
        <position position="462"/>
    </location>
</feature>
<feature type="glycosylation site" description="N-linked (GlcNAc...) asparagine" evidence="4">
    <location>
        <position position="478"/>
    </location>
</feature>
<feature type="glycosylation site" description="N-linked (GlcNAc...) asparagine" evidence="4">
    <location>
        <position position="536"/>
    </location>
</feature>
<feature type="glycosylation site" description="N-linked (GlcNAc...) asparagine" evidence="4">
    <location>
        <position position="549"/>
    </location>
</feature>
<feature type="glycosylation site" description="N-linked (GlcNAc...) asparagine" evidence="4">
    <location>
        <position position="563"/>
    </location>
</feature>
<feature type="glycosylation site" description="N-linked (GlcNAc...) asparagine" evidence="4">
    <location>
        <position position="570"/>
    </location>
</feature>
<feature type="glycosylation site" description="N-linked (GlcNAc...) asparagine" evidence="4">
    <location>
        <position position="665"/>
    </location>
</feature>
<feature type="glycosylation site" description="N-linked (GlcNAc...) asparagine" evidence="4">
    <location>
        <position position="674"/>
    </location>
</feature>
<feature type="glycosylation site" description="N-linked (GlcNAc...) asparagine" evidence="4">
    <location>
        <position position="720"/>
    </location>
</feature>
<feature type="glycosylation site" description="N-linked (GlcNAc...) asparagine" evidence="4">
    <location>
        <position position="746"/>
    </location>
</feature>
<feature type="glycosylation site" description="N-linked (GlcNAc...) asparagine" evidence="4">
    <location>
        <position position="781"/>
    </location>
</feature>
<feature type="glycosylation site" description="N-linked (GlcNAc...) asparagine" evidence="4">
    <location>
        <position position="788"/>
    </location>
</feature>
<feature type="disulfide bond" evidence="5">
    <location>
        <begin position="41"/>
        <end position="67"/>
    </location>
</feature>
<feature type="disulfide bond" evidence="5">
    <location>
        <begin position="94"/>
        <end position="111"/>
    </location>
</feature>
<feature type="disulfide bond" evidence="7">
    <location>
        <begin position="186"/>
        <end position="254"/>
    </location>
</feature>
<feature type="disulfide bond" evidence="1">
    <location>
        <begin position="231"/>
        <end position="277"/>
    </location>
</feature>
<feature type="disulfide bond" evidence="1">
    <location>
        <begin position="498"/>
        <end position="533"/>
    </location>
</feature>
<feature type="disulfide bond" evidence="1">
    <location>
        <begin position="521"/>
        <end position="550"/>
    </location>
</feature>
<feature type="disulfide bond" evidence="6">
    <location>
        <begin position="773"/>
        <end position="805"/>
    </location>
</feature>
<feature type="disulfide bond" evidence="6">
    <location>
        <begin position="792"/>
        <end position="807"/>
    </location>
</feature>
<sequence>MMFDTLGKRCCPWRLKPSALLFLFVLCVTCVPLSVCGCGSCRLVLSNPSGTFTSPCYPNDYPNTQSCSWTLRAPAGYIIQITFNDFDIEEAPNCIYDSLSLDNGESQTKFCGATAKGLSFNSSVNEMHVSFSSDFSIQKKGFNASYIRVAVSLRNQKVILPQTLDAYQVSVAKSISIPELKAFTLCFEASKVGNEGGDWTAFSYSDESLTQLLSLEKASNGYFLSISGSRCLLNNALPVKDKEDIFTENLEQLCLVWNNSWGSIGINFKKNYETVPCDSTISAVVPGDGTLLLGSDRDEVASLRGSIYNFRLWNFTMDLKALSNLSCSVSGNVIDWHNDFWSISTQALKAEGNLSCGSYLIQLPAAELTNCSELGTLCQDGIMYRISVVIHNDFNHPEVKVQTKVAEWLNSTFQNWNYTVYVVNISFHQKVGEDRMKVKRDIMDDDKRLVLWALLVYNATNNVSLNEEKIKQKLMTNNASLEDGLRLCEVDVNQLGMCSALEDPDGFSWPATLPSVYKQPCPNKPGFFMTRACLSNGTSTFWGPVDTSNCSRQSNEVANEILNQTGDGQNLTSANINSIVEKVKRIVNKEENIDITLGSTLMNIFSNILSSSDSDLLESSTEALKTIDELAFKIDLNSTPHVNIETQNLALGVSSLIPGTNAPSNFSIGLPSNNESYFQMDFGNGQTDPLASVILPPNLLENLSPEDSVLVRRAQFTFFNKTGLFQDVGSQRKVLVSYVMACSIGNITIQNLKDPVQIKIKHTRTQEVHHPICAFWDMNKNKSFGGWNTSGCVAHSDLDAGETICLCSHFTHFGVLMDLPRSASQIDGRNTKVLTFITYIGCGISAIFSAATLLTYVAFEKLRRDYPSKILMNLSSALLFLNLIFLLDGWVTSFGVAGLCTAVAALLHFFLLATFTWMGLEAIHMYIALVKVFNTYIHRYILKFCIIGWGLPALVVSIILVSRRQNEVYGKESYGKDQDDEFCWIQDPVVFYVSCAGYFGVMFFLNVAMFIVVMVQICGRNGKRSNRTLREEVLRNLRSVVSLTFLLGMTWGFAFFAWGPLNIPFMYLFSIFNSLQGLFIFIFHCAMKENVQKQWRRHLCCGRFRLADNSDWSKTATNIIKKSSDNLGKSLSSSSIGSNSTYLTSKSKSSSTTYFKRNSHSDNFS</sequence>
<reference key="1">
    <citation type="journal article" date="2004" name="Genes Cells">
        <title>DREG, a developmentally regulated G protein-coupled receptor containing two conserved proteolytic cleavage sites.</title>
        <authorList>
            <person name="Moriguchi T."/>
            <person name="Haraguchi K."/>
            <person name="Ueda N."/>
            <person name="Okada M."/>
            <person name="Furuya T."/>
            <person name="Akiyama T."/>
        </authorList>
    </citation>
    <scope>NUCLEOTIDE SEQUENCE [MRNA]</scope>
    <scope>PROTEIN SEQUENCE OF 441-447 AND 811-814</scope>
    <scope>PROTEOLYTIC PROCESSING</scope>
    <scope>TISSUE SPECIFICITY</scope>
</reference>
<reference key="2">
    <citation type="journal article" date="2004" name="Genome Res.">
        <title>The status, quality, and expansion of the NIH full-length cDNA project: the Mammalian Gene Collection (MGC).</title>
        <authorList>
            <consortium name="The MGC Project Team"/>
        </authorList>
    </citation>
    <scope>NUCLEOTIDE SEQUENCE [LARGE SCALE MRNA] OF 965-1165</scope>
    <source>
        <strain>FVB/N-3</strain>
        <tissue>Mammary tumor</tissue>
    </source>
</reference>
<reference key="3">
    <citation type="journal article" date="2009" name="Mol. Cell. Proteomics">
        <title>The mouse C2C12 myoblast cell surface N-linked glycoproteome: identification, glycosite occupancy, and membrane orientation.</title>
        <authorList>
            <person name="Gundry R.L."/>
            <person name="Raginski K."/>
            <person name="Tarasova Y."/>
            <person name="Tchernyshyov I."/>
            <person name="Bausch-Fluck D."/>
            <person name="Elliott S.T."/>
            <person name="Boheler K.R."/>
            <person name="Van Eyk J.E."/>
            <person name="Wollscheid B."/>
        </authorList>
    </citation>
    <scope>GLYCOSYLATION [LARGE SCALE ANALYSIS] AT ASN-314</scope>
    <source>
        <tissue>Myoblast</tissue>
    </source>
</reference>
<reference key="4">
    <citation type="journal article" date="2010" name="Cell">
        <title>A tissue-specific atlas of mouse protein phosphorylation and expression.</title>
        <authorList>
            <person name="Huttlin E.L."/>
            <person name="Jedrychowski M.P."/>
            <person name="Elias J.E."/>
            <person name="Goswami T."/>
            <person name="Rad R."/>
            <person name="Beausoleil S.A."/>
            <person name="Villen J."/>
            <person name="Haas W."/>
            <person name="Sowa M.E."/>
            <person name="Gygi S.P."/>
        </authorList>
    </citation>
    <scope>PHOSPHORYLATION [LARGE SCALE ANALYSIS] AT SER-1135 AND SER-1138</scope>
    <scope>IDENTIFICATION BY MASS SPECTROMETRY [LARGE SCALE ANALYSIS]</scope>
    <source>
        <tissue>Lung</tissue>
    </source>
</reference>
<reference key="5">
    <citation type="journal article" date="2010" name="PLoS ONE">
        <title>The orphan adhesion-GPCR GPR126 is required for embryonic development in the mouse.</title>
        <authorList>
            <person name="Waller-Evans H."/>
            <person name="Proemel S."/>
            <person name="Langenhan T."/>
            <person name="Dixon J."/>
            <person name="Zahn D."/>
            <person name="Colledge W.H."/>
            <person name="Doran J."/>
            <person name="Carlton M.B."/>
            <person name="Davies B."/>
            <person name="Aparicio S.A."/>
            <person name="Grosse J."/>
            <person name="Russ A.P."/>
        </authorList>
    </citation>
    <scope>DISRUPTION PHENOTYPE</scope>
</reference>
<reference key="6">
    <citation type="journal article" date="2011" name="Development">
        <title>Gpr126 is essential for peripheral nerve development and myelination in mammals.</title>
        <authorList>
            <person name="Monk K.R."/>
            <person name="Oshima K."/>
            <person name="Joers S."/>
            <person name="Heller S."/>
            <person name="Talbot W.S."/>
        </authorList>
    </citation>
    <scope>FUNCTION</scope>
    <scope>DISRUPTION PHENOTYPE</scope>
</reference>
<reference key="7">
    <citation type="journal article" date="2013" name="J. Neurosci.">
        <title>Gpr126 functions in Schwann cells to control differentiation and myelination via G-protein activation.</title>
        <authorList>
            <person name="Mogha A."/>
            <person name="Benesh A.E."/>
            <person name="Patra C."/>
            <person name="Engel F.B."/>
            <person name="Schoeneberg T."/>
            <person name="Liebscher I."/>
            <person name="Monk K.R."/>
        </authorList>
    </citation>
    <scope>FUNCTION</scope>
</reference>
<reference key="8">
    <citation type="journal article" date="2013" name="Proc. Natl. Acad. Sci. U.S.A.">
        <title>Organ-specific function of adhesion G protein-coupled receptor GPR126 is domain-dependent.</title>
        <authorList>
            <person name="Patra C."/>
            <person name="van Amerongen M.J."/>
            <person name="Ghosh S."/>
            <person name="Ricciardi F."/>
            <person name="Sajjad A."/>
            <person name="Novoyatleva T."/>
            <person name="Mogha A."/>
            <person name="Monk K.R."/>
            <person name="Muehlfeld C."/>
            <person name="Engel F.B."/>
        </authorList>
    </citation>
    <scope>DISRUPTION PHENOTYPE</scope>
    <scope>TISSUE SPECIFICITY</scope>
    <scope>FUNCTION</scope>
</reference>
<reference key="9">
    <citation type="journal article" date="2014" name="J. Biol. Chem.">
        <title>GPR126 protein regulates developmental and pathological angiogenesis through modulation of VEGFR2 receptor signaling.</title>
        <authorList>
            <person name="Cui H."/>
            <person name="Wang Y."/>
            <person name="Huang H."/>
            <person name="Yu W."/>
            <person name="Bai M."/>
            <person name="Zhang L."/>
            <person name="Bryan B.A."/>
            <person name="Wang Y."/>
            <person name="Luo J."/>
            <person name="Li D."/>
            <person name="Ma Y."/>
            <person name="Liu M."/>
        </authorList>
    </citation>
    <scope>FUNCTION</scope>
</reference>
<reference key="10">
    <citation type="journal article" date="2015" name="Neuron">
        <title>The adhesion GPCR GPR126 has distinct, domain-dependent functions in Schwann cell development mediated by interaction with laminin-211.</title>
        <authorList>
            <person name="Petersen S.C."/>
            <person name="Luo R."/>
            <person name="Liebscher I."/>
            <person name="Giera S."/>
            <person name="Jeong S.J."/>
            <person name="Mogha A."/>
            <person name="Ghidinelli M."/>
            <person name="Feltri M.L."/>
            <person name="Schoeneberg T."/>
            <person name="Piao X."/>
            <person name="Monk K.R."/>
        </authorList>
    </citation>
    <scope>INTERACTION WITH LAMININ-2/LAMININ-211</scope>
    <scope>FUNCTION</scope>
</reference>
<reference key="11">
    <citation type="journal article" date="2016" name="J. Neurosci.">
        <title>Gpr126/Adgrg6 has schwann cell autonomous and nonautonomous functions in peripheral nerve injury and repair.</title>
        <authorList>
            <person name="Mogha A."/>
            <person name="Harty B.L."/>
            <person name="Carlin D."/>
            <person name="Joseph J."/>
            <person name="Sanchez N.E."/>
            <person name="Suter U."/>
            <person name="Piao X."/>
            <person name="Cavalli V."/>
            <person name="Monk K.R."/>
        </authorList>
    </citation>
    <scope>FUNCTION</scope>
</reference>
<reference key="12">
    <citation type="journal article" date="2016" name="Nature">
        <title>The prion protein is an agonistic ligand of the G protein-coupled receptor Adgrg6.</title>
        <authorList>
            <person name="Kueffer A."/>
            <person name="Lakkaraju A.K."/>
            <person name="Mogha A."/>
            <person name="Petersen S.C."/>
            <person name="Airich K."/>
            <person name="Doucerain C."/>
            <person name="Marpakwar R."/>
            <person name="Bakirci P."/>
            <person name="Senatore A."/>
            <person name="Monnard A."/>
            <person name="Schiavi C."/>
            <person name="Nuvolone M."/>
            <person name="Grosshans B."/>
            <person name="Hornemann S."/>
            <person name="Bassilana F."/>
            <person name="Monk K.R."/>
            <person name="Aguzzi A."/>
        </authorList>
    </citation>
    <scope>INTERACTION WITH PRNP</scope>
    <scope>FUNCTION</scope>
</reference>
<reference key="13">
    <citation type="journal article" date="2015" name="Hum. Mol. Genet.">
        <title>Gpr126/Adgrg6 deletion in cartilage models idiopathic scoliosis and pectus excavatum in mice.</title>
        <authorList>
            <person name="Karner C.M."/>
            <person name="Long F."/>
            <person name="Solnica-Krezel L."/>
            <person name="Monk K.R."/>
            <person name="Gray R.S."/>
        </authorList>
    </citation>
    <scope>FUNCTION</scope>
    <scope>DISRUPTION PHENOTYPE</scope>
</reference>
<reference key="14">
    <citation type="journal article" date="2020" name="Sci. Adv.">
        <title>Regulation of body length and bone mass by Gpr126/Adgrg6.</title>
        <authorList>
            <person name="Sun P."/>
            <person name="He L."/>
            <person name="Jia K."/>
            <person name="Yue Z."/>
            <person name="Li S."/>
            <person name="Jin Y."/>
            <person name="Li Z."/>
            <person name="Siwko S."/>
            <person name="Xue F."/>
            <person name="Su J."/>
            <person name="Liu M."/>
            <person name="Luo J."/>
        </authorList>
    </citation>
    <scope>FUNCTION</scope>
</reference>
<reference key="15">
    <citation type="journal article" date="2021" name="Sci. Adv.">
        <title>Adhesion G protein-coupled receptor Gpr126/Adgrg6 is essential for placental development.</title>
        <authorList>
            <person name="Torregrosa-Carrion R."/>
            <person name="Pineiro-Sabaris R."/>
            <person name="Siguero-Alvarez M."/>
            <person name="Grego-Bessa J."/>
            <person name="Luna-Zurita L."/>
            <person name="Fernandes V.S."/>
            <person name="MacGrogan D."/>
            <person name="Stainier D.Y.R."/>
            <person name="de la Pompa J.L."/>
        </authorList>
    </citation>
    <scope>FUNCTION</scope>
</reference>
<reference key="16">
    <citation type="journal article" date="2024" name="J. Clin. Invest.">
        <title>GPR126 is a specifier of blood-brain barrier formation in the mouse central nervous system.</title>
        <authorList>
            <person name="Kakogiannos N."/>
            <person name="Scalise A.A."/>
            <person name="Martini E."/>
            <person name="Maderna C."/>
            <person name="Benvenuto A.F."/>
            <person name="D'Antonio M."/>
            <person name="Carmignani L."/>
            <person name="Magni S."/>
            <person name="Gullotta G.S."/>
            <person name="Lampugnani M.G."/>
            <person name="Iannelli F."/>
            <person name="Beznoussenko G.V."/>
            <person name="Mironov A.A."/>
            <person name="Cerutti C."/>
            <person name="Bentley K."/>
            <person name="Philippides A."/>
            <person name="Zanardi F."/>
            <person name="Bacigaluppi M."/>
            <person name="Sigismund S."/>
            <person name="Bassani C."/>
            <person name="Farina C."/>
            <person name="Martino G."/>
            <person name="De Giovanni M."/>
            <person name="Dejana E."/>
            <person name="Iannacone M."/>
            <person name="Inverso D."/>
            <person name="Giannotta M."/>
        </authorList>
    </citation>
    <scope>FUNCTION</scope>
    <scope>SUBCELLULAR LOCATION</scope>
    <scope>DISRUPTION PHENOTYPE</scope>
    <scope>INTERACTION WITH ITGB1 AND LRP1</scope>
</reference>